<keyword id="KW-0687">Ribonucleoprotein</keyword>
<keyword id="KW-0689">Ribosomal protein</keyword>
<accession>B5FM60</accession>
<dbReference type="EMBL" id="CP001144">
    <property type="protein sequence ID" value="ACH74982.1"/>
    <property type="molecule type" value="Genomic_DNA"/>
</dbReference>
<dbReference type="RefSeq" id="WP_001051798.1">
    <property type="nucleotide sequence ID" value="NC_011205.1"/>
</dbReference>
<dbReference type="SMR" id="B5FM60"/>
<dbReference type="GeneID" id="97607673"/>
<dbReference type="KEGG" id="sed:SeD_A4114"/>
<dbReference type="HOGENOM" id="CLU_190949_1_1_6"/>
<dbReference type="Proteomes" id="UP000008322">
    <property type="component" value="Chromosome"/>
</dbReference>
<dbReference type="GO" id="GO:0022625">
    <property type="term" value="C:cytosolic large ribosomal subunit"/>
    <property type="evidence" value="ECO:0007669"/>
    <property type="project" value="TreeGrafter"/>
</dbReference>
<dbReference type="GO" id="GO:0003735">
    <property type="term" value="F:structural constituent of ribosome"/>
    <property type="evidence" value="ECO:0007669"/>
    <property type="project" value="InterPro"/>
</dbReference>
<dbReference type="GO" id="GO:0006412">
    <property type="term" value="P:translation"/>
    <property type="evidence" value="ECO:0007669"/>
    <property type="project" value="UniProtKB-UniRule"/>
</dbReference>
<dbReference type="FunFam" id="2.20.28.120:FF:000001">
    <property type="entry name" value="50S ribosomal protein L33"/>
    <property type="match status" value="1"/>
</dbReference>
<dbReference type="Gene3D" id="2.20.28.120">
    <property type="entry name" value="Ribosomal protein L33"/>
    <property type="match status" value="1"/>
</dbReference>
<dbReference type="HAMAP" id="MF_00294">
    <property type="entry name" value="Ribosomal_bL33"/>
    <property type="match status" value="1"/>
</dbReference>
<dbReference type="InterPro" id="IPR001705">
    <property type="entry name" value="Ribosomal_bL33"/>
</dbReference>
<dbReference type="InterPro" id="IPR018264">
    <property type="entry name" value="Ribosomal_bL33_CS"/>
</dbReference>
<dbReference type="InterPro" id="IPR038584">
    <property type="entry name" value="Ribosomal_bL33_sf"/>
</dbReference>
<dbReference type="InterPro" id="IPR011332">
    <property type="entry name" value="Ribosomal_zn-bd"/>
</dbReference>
<dbReference type="NCBIfam" id="NF001860">
    <property type="entry name" value="PRK00595.1"/>
    <property type="match status" value="1"/>
</dbReference>
<dbReference type="NCBIfam" id="TIGR01023">
    <property type="entry name" value="rpmG_bact"/>
    <property type="match status" value="1"/>
</dbReference>
<dbReference type="PANTHER" id="PTHR15238">
    <property type="entry name" value="54S RIBOSOMAL PROTEIN L39, MITOCHONDRIAL"/>
    <property type="match status" value="1"/>
</dbReference>
<dbReference type="PANTHER" id="PTHR15238:SF1">
    <property type="entry name" value="LARGE RIBOSOMAL SUBUNIT PROTEIN BL33M"/>
    <property type="match status" value="1"/>
</dbReference>
<dbReference type="Pfam" id="PF00471">
    <property type="entry name" value="Ribosomal_L33"/>
    <property type="match status" value="1"/>
</dbReference>
<dbReference type="SUPFAM" id="SSF57829">
    <property type="entry name" value="Zn-binding ribosomal proteins"/>
    <property type="match status" value="1"/>
</dbReference>
<dbReference type="PROSITE" id="PS00582">
    <property type="entry name" value="RIBOSOMAL_L33"/>
    <property type="match status" value="1"/>
</dbReference>
<name>RL33_SALDC</name>
<protein>
    <recommendedName>
        <fullName evidence="1">Large ribosomal subunit protein bL33</fullName>
    </recommendedName>
    <alternativeName>
        <fullName evidence="2">50S ribosomal protein L33</fullName>
    </alternativeName>
</protein>
<reference key="1">
    <citation type="journal article" date="2011" name="J. Bacteriol.">
        <title>Comparative genomics of 28 Salmonella enterica isolates: evidence for CRISPR-mediated adaptive sublineage evolution.</title>
        <authorList>
            <person name="Fricke W.F."/>
            <person name="Mammel M.K."/>
            <person name="McDermott P.F."/>
            <person name="Tartera C."/>
            <person name="White D.G."/>
            <person name="Leclerc J.E."/>
            <person name="Ravel J."/>
            <person name="Cebula T.A."/>
        </authorList>
    </citation>
    <scope>NUCLEOTIDE SEQUENCE [LARGE SCALE GENOMIC DNA]</scope>
    <source>
        <strain>CT_02021853</strain>
    </source>
</reference>
<comment type="similarity">
    <text evidence="1">Belongs to the bacterial ribosomal protein bL33 family.</text>
</comment>
<evidence type="ECO:0000255" key="1">
    <source>
        <dbReference type="HAMAP-Rule" id="MF_00294"/>
    </source>
</evidence>
<evidence type="ECO:0000305" key="2"/>
<feature type="chain" id="PRO_0000356649" description="Large ribosomal subunit protein bL33">
    <location>
        <begin position="1"/>
        <end position="55"/>
    </location>
</feature>
<proteinExistence type="inferred from homology"/>
<organism>
    <name type="scientific">Salmonella dublin (strain CT_02021853)</name>
    <dbReference type="NCBI Taxonomy" id="439851"/>
    <lineage>
        <taxon>Bacteria</taxon>
        <taxon>Pseudomonadati</taxon>
        <taxon>Pseudomonadota</taxon>
        <taxon>Gammaproteobacteria</taxon>
        <taxon>Enterobacterales</taxon>
        <taxon>Enterobacteriaceae</taxon>
        <taxon>Salmonella</taxon>
    </lineage>
</organism>
<sequence>MAKGIREKIKLVSSAGTGHFYTTTKNKRTKPEKLELKKFDPVVRQHVIYKEAKIK</sequence>
<gene>
    <name evidence="1" type="primary">rpmG</name>
    <name type="ordered locus">SeD_A4114</name>
</gene>